<accession>A1T6X7</accession>
<keyword id="KW-0227">DNA damage</keyword>
<keyword id="KW-0234">DNA repair</keyword>
<keyword id="KW-0235">DNA replication</keyword>
<keyword id="KW-0436">Ligase</keyword>
<keyword id="KW-0460">Magnesium</keyword>
<keyword id="KW-0464">Manganese</keyword>
<keyword id="KW-0479">Metal-binding</keyword>
<keyword id="KW-0520">NAD</keyword>
<keyword id="KW-0862">Zinc</keyword>
<name>DNLJ_MYCVP</name>
<protein>
    <recommendedName>
        <fullName evidence="1">DNA ligase</fullName>
        <ecNumber evidence="1">6.5.1.2</ecNumber>
    </recommendedName>
    <alternativeName>
        <fullName evidence="1">Polydeoxyribonucleotide synthase [NAD(+)]</fullName>
    </alternativeName>
</protein>
<reference key="1">
    <citation type="submission" date="2006-12" db="EMBL/GenBank/DDBJ databases">
        <title>Complete sequence of Mycobacterium vanbaalenii PYR-1.</title>
        <authorList>
            <consortium name="US DOE Joint Genome Institute"/>
            <person name="Copeland A."/>
            <person name="Lucas S."/>
            <person name="Lapidus A."/>
            <person name="Barry K."/>
            <person name="Detter J.C."/>
            <person name="Glavina del Rio T."/>
            <person name="Hammon N."/>
            <person name="Israni S."/>
            <person name="Dalin E."/>
            <person name="Tice H."/>
            <person name="Pitluck S."/>
            <person name="Singan V."/>
            <person name="Schmutz J."/>
            <person name="Larimer F."/>
            <person name="Land M."/>
            <person name="Hauser L."/>
            <person name="Kyrpides N."/>
            <person name="Anderson I.J."/>
            <person name="Miller C."/>
            <person name="Richardson P."/>
        </authorList>
    </citation>
    <scope>NUCLEOTIDE SEQUENCE [LARGE SCALE GENOMIC DNA]</scope>
    <source>
        <strain>DSM 7251 / JCM 13017 / BCRC 16820 / KCTC 9966 / NRRL B-24157 / PYR-1</strain>
    </source>
</reference>
<comment type="function">
    <text evidence="1">DNA ligase that catalyzes the formation of phosphodiester linkages between 5'-phosphoryl and 3'-hydroxyl groups in double-stranded DNA using NAD as a coenzyme and as the energy source for the reaction. It is essential for DNA replication and repair of damaged DNA.</text>
</comment>
<comment type="catalytic activity">
    <reaction evidence="1">
        <text>NAD(+) + (deoxyribonucleotide)n-3'-hydroxyl + 5'-phospho-(deoxyribonucleotide)m = (deoxyribonucleotide)n+m + AMP + beta-nicotinamide D-nucleotide.</text>
        <dbReference type="EC" id="6.5.1.2"/>
    </reaction>
</comment>
<comment type="cofactor">
    <cofactor evidence="1">
        <name>Mg(2+)</name>
        <dbReference type="ChEBI" id="CHEBI:18420"/>
    </cofactor>
    <cofactor evidence="1">
        <name>Mn(2+)</name>
        <dbReference type="ChEBI" id="CHEBI:29035"/>
    </cofactor>
</comment>
<comment type="similarity">
    <text evidence="1">Belongs to the NAD-dependent DNA ligase family. LigA subfamily.</text>
</comment>
<dbReference type="EC" id="6.5.1.2" evidence="1"/>
<dbReference type="EMBL" id="CP000511">
    <property type="protein sequence ID" value="ABM12927.1"/>
    <property type="molecule type" value="Genomic_DNA"/>
</dbReference>
<dbReference type="RefSeq" id="WP_011779341.1">
    <property type="nucleotide sequence ID" value="NZ_JACKSD010000243.1"/>
</dbReference>
<dbReference type="SMR" id="A1T6X7"/>
<dbReference type="STRING" id="350058.Mvan_2112"/>
<dbReference type="KEGG" id="mva:Mvan_2112"/>
<dbReference type="eggNOG" id="COG0272">
    <property type="taxonomic scope" value="Bacteria"/>
</dbReference>
<dbReference type="HOGENOM" id="CLU_007764_2_1_11"/>
<dbReference type="Proteomes" id="UP000009159">
    <property type="component" value="Chromosome"/>
</dbReference>
<dbReference type="GO" id="GO:0005829">
    <property type="term" value="C:cytosol"/>
    <property type="evidence" value="ECO:0007669"/>
    <property type="project" value="TreeGrafter"/>
</dbReference>
<dbReference type="GO" id="GO:0003911">
    <property type="term" value="F:DNA ligase (NAD+) activity"/>
    <property type="evidence" value="ECO:0007669"/>
    <property type="project" value="UniProtKB-UniRule"/>
</dbReference>
<dbReference type="GO" id="GO:0046872">
    <property type="term" value="F:metal ion binding"/>
    <property type="evidence" value="ECO:0007669"/>
    <property type="project" value="UniProtKB-KW"/>
</dbReference>
<dbReference type="GO" id="GO:0006281">
    <property type="term" value="P:DNA repair"/>
    <property type="evidence" value="ECO:0007669"/>
    <property type="project" value="UniProtKB-KW"/>
</dbReference>
<dbReference type="GO" id="GO:0006260">
    <property type="term" value="P:DNA replication"/>
    <property type="evidence" value="ECO:0007669"/>
    <property type="project" value="UniProtKB-KW"/>
</dbReference>
<dbReference type="CDD" id="cd17748">
    <property type="entry name" value="BRCT_DNA_ligase_like"/>
    <property type="match status" value="1"/>
</dbReference>
<dbReference type="CDD" id="cd00114">
    <property type="entry name" value="LIGANc"/>
    <property type="match status" value="1"/>
</dbReference>
<dbReference type="FunFam" id="1.10.150.20:FF:000006">
    <property type="entry name" value="DNA ligase"/>
    <property type="match status" value="1"/>
</dbReference>
<dbReference type="FunFam" id="1.10.287.610:FF:000002">
    <property type="entry name" value="DNA ligase"/>
    <property type="match status" value="1"/>
</dbReference>
<dbReference type="FunFam" id="2.40.50.140:FF:000012">
    <property type="entry name" value="DNA ligase"/>
    <property type="match status" value="1"/>
</dbReference>
<dbReference type="FunFam" id="3.30.470.30:FF:000001">
    <property type="entry name" value="DNA ligase"/>
    <property type="match status" value="1"/>
</dbReference>
<dbReference type="FunFam" id="3.40.50.10190:FF:000054">
    <property type="entry name" value="DNA ligase"/>
    <property type="match status" value="1"/>
</dbReference>
<dbReference type="Gene3D" id="6.20.10.30">
    <property type="match status" value="1"/>
</dbReference>
<dbReference type="Gene3D" id="1.10.150.20">
    <property type="entry name" value="5' to 3' exonuclease, C-terminal subdomain"/>
    <property type="match status" value="2"/>
</dbReference>
<dbReference type="Gene3D" id="3.40.50.10190">
    <property type="entry name" value="BRCT domain"/>
    <property type="match status" value="1"/>
</dbReference>
<dbReference type="Gene3D" id="3.30.470.30">
    <property type="entry name" value="DNA ligase/mRNA capping enzyme"/>
    <property type="match status" value="1"/>
</dbReference>
<dbReference type="Gene3D" id="1.10.287.610">
    <property type="entry name" value="Helix hairpin bin"/>
    <property type="match status" value="1"/>
</dbReference>
<dbReference type="Gene3D" id="2.40.50.140">
    <property type="entry name" value="Nucleic acid-binding proteins"/>
    <property type="match status" value="1"/>
</dbReference>
<dbReference type="HAMAP" id="MF_01588">
    <property type="entry name" value="DNA_ligase_A"/>
    <property type="match status" value="1"/>
</dbReference>
<dbReference type="InterPro" id="IPR001357">
    <property type="entry name" value="BRCT_dom"/>
</dbReference>
<dbReference type="InterPro" id="IPR036420">
    <property type="entry name" value="BRCT_dom_sf"/>
</dbReference>
<dbReference type="InterPro" id="IPR041663">
    <property type="entry name" value="DisA/LigA_HHH"/>
</dbReference>
<dbReference type="InterPro" id="IPR001679">
    <property type="entry name" value="DNA_ligase"/>
</dbReference>
<dbReference type="InterPro" id="IPR018239">
    <property type="entry name" value="DNA_ligase_AS"/>
</dbReference>
<dbReference type="InterPro" id="IPR033136">
    <property type="entry name" value="DNA_ligase_CS"/>
</dbReference>
<dbReference type="InterPro" id="IPR013839">
    <property type="entry name" value="DNAligase_adenylation"/>
</dbReference>
<dbReference type="InterPro" id="IPR013840">
    <property type="entry name" value="DNAligase_N"/>
</dbReference>
<dbReference type="InterPro" id="IPR012340">
    <property type="entry name" value="NA-bd_OB-fold"/>
</dbReference>
<dbReference type="InterPro" id="IPR004150">
    <property type="entry name" value="NAD_DNA_ligase_OB"/>
</dbReference>
<dbReference type="InterPro" id="IPR010994">
    <property type="entry name" value="RuvA_2-like"/>
</dbReference>
<dbReference type="InterPro" id="IPR004149">
    <property type="entry name" value="Znf_DNAligase_C4"/>
</dbReference>
<dbReference type="NCBIfam" id="TIGR00575">
    <property type="entry name" value="dnlj"/>
    <property type="match status" value="1"/>
</dbReference>
<dbReference type="NCBIfam" id="NF005932">
    <property type="entry name" value="PRK07956.1"/>
    <property type="match status" value="1"/>
</dbReference>
<dbReference type="PANTHER" id="PTHR23389">
    <property type="entry name" value="CHROMOSOME TRANSMISSION FIDELITY FACTOR 18"/>
    <property type="match status" value="1"/>
</dbReference>
<dbReference type="PANTHER" id="PTHR23389:SF9">
    <property type="entry name" value="DNA LIGASE"/>
    <property type="match status" value="1"/>
</dbReference>
<dbReference type="Pfam" id="PF00533">
    <property type="entry name" value="BRCT"/>
    <property type="match status" value="1"/>
</dbReference>
<dbReference type="Pfam" id="PF01653">
    <property type="entry name" value="DNA_ligase_aden"/>
    <property type="match status" value="1"/>
</dbReference>
<dbReference type="Pfam" id="PF03120">
    <property type="entry name" value="DNA_ligase_OB"/>
    <property type="match status" value="1"/>
</dbReference>
<dbReference type="Pfam" id="PF03119">
    <property type="entry name" value="DNA_ligase_ZBD"/>
    <property type="match status" value="1"/>
</dbReference>
<dbReference type="Pfam" id="PF12826">
    <property type="entry name" value="HHH_2"/>
    <property type="match status" value="1"/>
</dbReference>
<dbReference type="Pfam" id="PF22745">
    <property type="entry name" value="Nlig-Ia"/>
    <property type="match status" value="1"/>
</dbReference>
<dbReference type="PIRSF" id="PIRSF001604">
    <property type="entry name" value="LigA"/>
    <property type="match status" value="1"/>
</dbReference>
<dbReference type="SMART" id="SM00292">
    <property type="entry name" value="BRCT"/>
    <property type="match status" value="1"/>
</dbReference>
<dbReference type="SMART" id="SM00532">
    <property type="entry name" value="LIGANc"/>
    <property type="match status" value="1"/>
</dbReference>
<dbReference type="SUPFAM" id="SSF52113">
    <property type="entry name" value="BRCT domain"/>
    <property type="match status" value="1"/>
</dbReference>
<dbReference type="SUPFAM" id="SSF56091">
    <property type="entry name" value="DNA ligase/mRNA capping enzyme, catalytic domain"/>
    <property type="match status" value="1"/>
</dbReference>
<dbReference type="SUPFAM" id="SSF50249">
    <property type="entry name" value="Nucleic acid-binding proteins"/>
    <property type="match status" value="1"/>
</dbReference>
<dbReference type="SUPFAM" id="SSF47781">
    <property type="entry name" value="RuvA domain 2-like"/>
    <property type="match status" value="1"/>
</dbReference>
<dbReference type="PROSITE" id="PS50172">
    <property type="entry name" value="BRCT"/>
    <property type="match status" value="1"/>
</dbReference>
<dbReference type="PROSITE" id="PS01055">
    <property type="entry name" value="DNA_LIGASE_N1"/>
    <property type="match status" value="1"/>
</dbReference>
<dbReference type="PROSITE" id="PS01056">
    <property type="entry name" value="DNA_LIGASE_N2"/>
    <property type="match status" value="1"/>
</dbReference>
<feature type="chain" id="PRO_0000313318" description="DNA ligase">
    <location>
        <begin position="1"/>
        <end position="707"/>
    </location>
</feature>
<feature type="domain" description="BRCT" evidence="1">
    <location>
        <begin position="622"/>
        <end position="707"/>
    </location>
</feature>
<feature type="region of interest" description="Disordered" evidence="2">
    <location>
        <begin position="1"/>
        <end position="23"/>
    </location>
</feature>
<feature type="active site" description="N6-AMP-lysine intermediate" evidence="1">
    <location>
        <position position="135"/>
    </location>
</feature>
<feature type="binding site" evidence="1">
    <location>
        <begin position="53"/>
        <end position="57"/>
    </location>
    <ligand>
        <name>NAD(+)</name>
        <dbReference type="ChEBI" id="CHEBI:57540"/>
    </ligand>
</feature>
<feature type="binding site" evidence="1">
    <location>
        <begin position="103"/>
        <end position="104"/>
    </location>
    <ligand>
        <name>NAD(+)</name>
        <dbReference type="ChEBI" id="CHEBI:57540"/>
    </ligand>
</feature>
<feature type="binding site" evidence="1">
    <location>
        <position position="133"/>
    </location>
    <ligand>
        <name>NAD(+)</name>
        <dbReference type="ChEBI" id="CHEBI:57540"/>
    </ligand>
</feature>
<feature type="binding site" evidence="1">
    <location>
        <position position="156"/>
    </location>
    <ligand>
        <name>NAD(+)</name>
        <dbReference type="ChEBI" id="CHEBI:57540"/>
    </ligand>
</feature>
<feature type="binding site" evidence="1">
    <location>
        <position position="196"/>
    </location>
    <ligand>
        <name>NAD(+)</name>
        <dbReference type="ChEBI" id="CHEBI:57540"/>
    </ligand>
</feature>
<feature type="binding site" evidence="1">
    <location>
        <position position="315"/>
    </location>
    <ligand>
        <name>NAD(+)</name>
        <dbReference type="ChEBI" id="CHEBI:57540"/>
    </ligand>
</feature>
<feature type="binding site" evidence="1">
    <location>
        <position position="339"/>
    </location>
    <ligand>
        <name>NAD(+)</name>
        <dbReference type="ChEBI" id="CHEBI:57540"/>
    </ligand>
</feature>
<feature type="binding site" evidence="1">
    <location>
        <position position="433"/>
    </location>
    <ligand>
        <name>Zn(2+)</name>
        <dbReference type="ChEBI" id="CHEBI:29105"/>
    </ligand>
</feature>
<feature type="binding site" evidence="1">
    <location>
        <position position="436"/>
    </location>
    <ligand>
        <name>Zn(2+)</name>
        <dbReference type="ChEBI" id="CHEBI:29105"/>
    </ligand>
</feature>
<feature type="binding site" evidence="1">
    <location>
        <position position="452"/>
    </location>
    <ligand>
        <name>Zn(2+)</name>
        <dbReference type="ChEBI" id="CHEBI:29105"/>
    </ligand>
</feature>
<feature type="binding site" evidence="1">
    <location>
        <position position="458"/>
    </location>
    <ligand>
        <name>Zn(2+)</name>
        <dbReference type="ChEBI" id="CHEBI:29105"/>
    </ligand>
</feature>
<proteinExistence type="inferred from homology"/>
<gene>
    <name evidence="1" type="primary">ligA</name>
    <name type="ordered locus">Mvan_2112</name>
</gene>
<sequence>MSSKATQDPEAVLAEQSDDATEAGLRRQWQELADEVRDHQFRYYVRDAPIITDAEFDAMLRRLEALEEAHPELRTPDSPTQLVGGAGFATDFTAAEHLERMLSLDNVFTPDELAAWAARIRTEIGADAQYLCELKIDGVALSLVYRDGRLERGATRGDGRTGEDVTLNARTIEDVPEKLTGTEEFPLPSVLEVRGEVFFRIADFEDLNAGLVAEGKPPFANPRNSAAGSLRQKNPAVTARRRLRMICHGLGHIEDAAGFPFRTLHDAYRALQAWGLPVSPHTAQVTGLDAVTERIAYWGEHRHDVEHEIDGVVVKVDEVALQRRLGATSRAPRWAVAYKYPPEEAQTKLLDIRVNVGRTGRVTPFAYMEPVKIAGSTVGLATLHNGSEVKRKGVLIGDTVVIRKAGDVIPEVLGPVVDLRDGSEREFVMPTHCPECGTELAPAKEGDADIRCPNSRTCPAQLRERVFHVAGRGAFDIEGLGYEAAIALLQARVITDEGDLFTLTADDLLRTDLFTTKAGELSANGKRLLTNLGKAKAQPLWRVLVALSIRHVGPTAARALATEFGSLDAIVAASEEELAAVEGVGPTIAAAVTDWFTVDWHRTIVDKWRAAGVRMADERDASIERTLDGLSIVVTGSLTGYSRDEAKEAIIARGGKAAGSVSKKTAYVVAGDSPGSKYDKAIELGVPVLDEDGFRRLLENGPDTPDS</sequence>
<organism>
    <name type="scientific">Mycolicibacterium vanbaalenii (strain DSM 7251 / JCM 13017 / BCRC 16820 / KCTC 9966 / NRRL B-24157 / PYR-1)</name>
    <name type="common">Mycobacterium vanbaalenii</name>
    <dbReference type="NCBI Taxonomy" id="350058"/>
    <lineage>
        <taxon>Bacteria</taxon>
        <taxon>Bacillati</taxon>
        <taxon>Actinomycetota</taxon>
        <taxon>Actinomycetes</taxon>
        <taxon>Mycobacteriales</taxon>
        <taxon>Mycobacteriaceae</taxon>
        <taxon>Mycolicibacterium</taxon>
    </lineage>
</organism>
<evidence type="ECO:0000255" key="1">
    <source>
        <dbReference type="HAMAP-Rule" id="MF_01588"/>
    </source>
</evidence>
<evidence type="ECO:0000256" key="2">
    <source>
        <dbReference type="SAM" id="MobiDB-lite"/>
    </source>
</evidence>